<reference key="1">
    <citation type="submission" date="1994-02" db="EMBL/GenBank/DDBJ databases">
        <title>N-terminal acetyltransferase complex subunit gene from Dictyostelium discoideum.</title>
        <authorList>
            <person name="Mueller-Taubenberger A."/>
        </authorList>
    </citation>
    <scope>NUCLEOTIDE SEQUENCE [MRNA]</scope>
    <source>
        <strain>AX2</strain>
    </source>
</reference>
<reference key="2">
    <citation type="journal article" date="2002" name="Nature">
        <title>Sequence and analysis of chromosome 2 of Dictyostelium discoideum.</title>
        <authorList>
            <person name="Gloeckner G."/>
            <person name="Eichinger L."/>
            <person name="Szafranski K."/>
            <person name="Pachebat J.A."/>
            <person name="Bankier A.T."/>
            <person name="Dear P.H."/>
            <person name="Lehmann R."/>
            <person name="Baumgart C."/>
            <person name="Parra G."/>
            <person name="Abril J.F."/>
            <person name="Guigo R."/>
            <person name="Kumpf K."/>
            <person name="Tunggal B."/>
            <person name="Cox E.C."/>
            <person name="Quail M.A."/>
            <person name="Platzer M."/>
            <person name="Rosenthal A."/>
            <person name="Noegel A.A."/>
        </authorList>
    </citation>
    <scope>NUCLEOTIDE SEQUENCE [LARGE SCALE GENOMIC DNA]</scope>
    <source>
        <strain>AX4</strain>
    </source>
</reference>
<reference key="3">
    <citation type="journal article" date="2005" name="Nature">
        <title>The genome of the social amoeba Dictyostelium discoideum.</title>
        <authorList>
            <person name="Eichinger L."/>
            <person name="Pachebat J.A."/>
            <person name="Gloeckner G."/>
            <person name="Rajandream M.A."/>
            <person name="Sucgang R."/>
            <person name="Berriman M."/>
            <person name="Song J."/>
            <person name="Olsen R."/>
            <person name="Szafranski K."/>
            <person name="Xu Q."/>
            <person name="Tunggal B."/>
            <person name="Kummerfeld S."/>
            <person name="Madera M."/>
            <person name="Konfortov B.A."/>
            <person name="Rivero F."/>
            <person name="Bankier A.T."/>
            <person name="Lehmann R."/>
            <person name="Hamlin N."/>
            <person name="Davies R."/>
            <person name="Gaudet P."/>
            <person name="Fey P."/>
            <person name="Pilcher K."/>
            <person name="Chen G."/>
            <person name="Saunders D."/>
            <person name="Sodergren E.J."/>
            <person name="Davis P."/>
            <person name="Kerhornou A."/>
            <person name="Nie X."/>
            <person name="Hall N."/>
            <person name="Anjard C."/>
            <person name="Hemphill L."/>
            <person name="Bason N."/>
            <person name="Farbrother P."/>
            <person name="Desany B."/>
            <person name="Just E."/>
            <person name="Morio T."/>
            <person name="Rost R."/>
            <person name="Churcher C.M."/>
            <person name="Cooper J."/>
            <person name="Haydock S."/>
            <person name="van Driessche N."/>
            <person name="Cronin A."/>
            <person name="Goodhead I."/>
            <person name="Muzny D.M."/>
            <person name="Mourier T."/>
            <person name="Pain A."/>
            <person name="Lu M."/>
            <person name="Harper D."/>
            <person name="Lindsay R."/>
            <person name="Hauser H."/>
            <person name="James K.D."/>
            <person name="Quiles M."/>
            <person name="Madan Babu M."/>
            <person name="Saito T."/>
            <person name="Buchrieser C."/>
            <person name="Wardroper A."/>
            <person name="Felder M."/>
            <person name="Thangavelu M."/>
            <person name="Johnson D."/>
            <person name="Knights A."/>
            <person name="Loulseged H."/>
            <person name="Mungall K.L."/>
            <person name="Oliver K."/>
            <person name="Price C."/>
            <person name="Quail M.A."/>
            <person name="Urushihara H."/>
            <person name="Hernandez J."/>
            <person name="Rabbinowitsch E."/>
            <person name="Steffen D."/>
            <person name="Sanders M."/>
            <person name="Ma J."/>
            <person name="Kohara Y."/>
            <person name="Sharp S."/>
            <person name="Simmonds M.N."/>
            <person name="Spiegler S."/>
            <person name="Tivey A."/>
            <person name="Sugano S."/>
            <person name="White B."/>
            <person name="Walker D."/>
            <person name="Woodward J.R."/>
            <person name="Winckler T."/>
            <person name="Tanaka Y."/>
            <person name="Shaulsky G."/>
            <person name="Schleicher M."/>
            <person name="Weinstock G.M."/>
            <person name="Rosenthal A."/>
            <person name="Cox E.C."/>
            <person name="Chisholm R.L."/>
            <person name="Gibbs R.A."/>
            <person name="Loomis W.F."/>
            <person name="Platzer M."/>
            <person name="Kay R.R."/>
            <person name="Williams J.G."/>
            <person name="Dear P.H."/>
            <person name="Noegel A.A."/>
            <person name="Barrell B.G."/>
            <person name="Kuspa A."/>
        </authorList>
    </citation>
    <scope>NUCLEOTIDE SEQUENCE [LARGE SCALE GENOMIC DNA]</scope>
    <source>
        <strain>AX4</strain>
    </source>
</reference>
<protein>
    <recommendedName>
        <fullName>N-terminal acetyltransferase complex ARD1 subunit homolog</fullName>
        <ecNumber>2.3.1.-</ecNumber>
    </recommendedName>
</protein>
<organism>
    <name type="scientific">Dictyostelium discoideum</name>
    <name type="common">Social amoeba</name>
    <dbReference type="NCBI Taxonomy" id="44689"/>
    <lineage>
        <taxon>Eukaryota</taxon>
        <taxon>Amoebozoa</taxon>
        <taxon>Evosea</taxon>
        <taxon>Eumycetozoa</taxon>
        <taxon>Dictyostelia</taxon>
        <taxon>Dictyosteliales</taxon>
        <taxon>Dictyosteliaceae</taxon>
        <taxon>Dictyostelium</taxon>
    </lineage>
</organism>
<comment type="function">
    <text evidence="1">Seems to be involved in N-acetylation.</text>
</comment>
<comment type="similarity">
    <text evidence="4">Belongs to the acetyltransferase family. ARD1 subfamily.</text>
</comment>
<sequence>MVSIRPCQIGDLMSMQNANLTCLPENYQMKYYLYHFLTWPQTSFVAEDDKGNVVGYVLAKIDENEPKRGHITSLAVLRSQRKLGIATKLMKQAEVALLEVYDADCVSLHVRKSNRAAFSLYHEVLKFKIDEIEKEYYGDKEDAYSMVLYLKPEVEEEKEREKQLEKINKAAKESIEAAKRANEEPKPVSNVIHGKKKNVKKIE</sequence>
<name>ARD1_DICDI</name>
<dbReference type="EC" id="2.3.1.-"/>
<dbReference type="EMBL" id="U06453">
    <property type="protein sequence ID" value="AAA16510.1"/>
    <property type="molecule type" value="mRNA"/>
</dbReference>
<dbReference type="EMBL" id="AAFI02000013">
    <property type="protein sequence ID" value="EAL69475.2"/>
    <property type="molecule type" value="Genomic_DNA"/>
</dbReference>
<dbReference type="RefSeq" id="XP_643534.2">
    <property type="nucleotide sequence ID" value="XM_638442.2"/>
</dbReference>
<dbReference type="SMR" id="P36416"/>
<dbReference type="FunCoup" id="P36416">
    <property type="interactions" value="325"/>
</dbReference>
<dbReference type="STRING" id="44689.P36416"/>
<dbReference type="PaxDb" id="44689-DDB0185212"/>
<dbReference type="EnsemblProtists" id="EAL69475">
    <property type="protein sequence ID" value="EAL69475"/>
    <property type="gene ID" value="DDB_G0275449"/>
</dbReference>
<dbReference type="GeneID" id="8620116"/>
<dbReference type="KEGG" id="ddi:DDB_G0275449"/>
<dbReference type="dictyBase" id="DDB_G0275449">
    <property type="gene designation" value="natA"/>
</dbReference>
<dbReference type="VEuPathDB" id="AmoebaDB:DDB_G0275449"/>
<dbReference type="eggNOG" id="KOG3235">
    <property type="taxonomic scope" value="Eukaryota"/>
</dbReference>
<dbReference type="HOGENOM" id="CLU_013985_7_2_1"/>
<dbReference type="InParanoid" id="P36416"/>
<dbReference type="OMA" id="MSMQNAN"/>
<dbReference type="PhylomeDB" id="P36416"/>
<dbReference type="PRO" id="PR:P36416"/>
<dbReference type="Proteomes" id="UP000002195">
    <property type="component" value="Chromosome 2"/>
</dbReference>
<dbReference type="GO" id="GO:0031415">
    <property type="term" value="C:NatA complex"/>
    <property type="evidence" value="ECO:0000318"/>
    <property type="project" value="GO_Central"/>
</dbReference>
<dbReference type="GO" id="GO:1990189">
    <property type="term" value="F:protein N-terminal-serine acetyltransferase activity"/>
    <property type="evidence" value="ECO:0000318"/>
    <property type="project" value="GO_Central"/>
</dbReference>
<dbReference type="GO" id="GO:1990190">
    <property type="term" value="F:protein-N-terminal-glutamate acetyltransferase activity"/>
    <property type="evidence" value="ECO:0000318"/>
    <property type="project" value="GO_Central"/>
</dbReference>
<dbReference type="CDD" id="cd04301">
    <property type="entry name" value="NAT_SF"/>
    <property type="match status" value="1"/>
</dbReference>
<dbReference type="FunFam" id="3.40.630.30:FF:000416">
    <property type="entry name" value="N-terminal acetyltransferase complex ARD1 subunit homolog"/>
    <property type="match status" value="1"/>
</dbReference>
<dbReference type="Gene3D" id="3.40.630.30">
    <property type="match status" value="1"/>
</dbReference>
<dbReference type="InterPro" id="IPR016181">
    <property type="entry name" value="Acyl_CoA_acyltransferase"/>
</dbReference>
<dbReference type="InterPro" id="IPR045047">
    <property type="entry name" value="Ard1-like"/>
</dbReference>
<dbReference type="InterPro" id="IPR000182">
    <property type="entry name" value="GNAT_dom"/>
</dbReference>
<dbReference type="PANTHER" id="PTHR23091">
    <property type="entry name" value="N-TERMINAL ACETYLTRANSFERASE"/>
    <property type="match status" value="1"/>
</dbReference>
<dbReference type="PANTHER" id="PTHR23091:SF4">
    <property type="entry name" value="N-TERMINAL AMINO-ACID N(ALPHA)-ACETYLTRANSFERASE NATA"/>
    <property type="match status" value="1"/>
</dbReference>
<dbReference type="Pfam" id="PF00583">
    <property type="entry name" value="Acetyltransf_1"/>
    <property type="match status" value="1"/>
</dbReference>
<dbReference type="SUPFAM" id="SSF55729">
    <property type="entry name" value="Acyl-CoA N-acyltransferases (Nat)"/>
    <property type="match status" value="1"/>
</dbReference>
<dbReference type="PROSITE" id="PS51186">
    <property type="entry name" value="GNAT"/>
    <property type="match status" value="1"/>
</dbReference>
<keyword id="KW-0012">Acyltransferase</keyword>
<keyword id="KW-1185">Reference proteome</keyword>
<keyword id="KW-0808">Transferase</keyword>
<feature type="chain" id="PRO_0000074530" description="N-terminal acetyltransferase complex ARD1 subunit homolog">
    <location>
        <begin position="1"/>
        <end position="203"/>
    </location>
</feature>
<feature type="domain" description="N-acetyltransferase" evidence="2">
    <location>
        <begin position="2"/>
        <end position="151"/>
    </location>
</feature>
<feature type="region of interest" description="Disordered" evidence="3">
    <location>
        <begin position="177"/>
        <end position="203"/>
    </location>
</feature>
<feature type="compositionally biased region" description="Basic and acidic residues" evidence="3">
    <location>
        <begin position="177"/>
        <end position="186"/>
    </location>
</feature>
<feature type="compositionally biased region" description="Basic residues" evidence="3">
    <location>
        <begin position="193"/>
        <end position="203"/>
    </location>
</feature>
<proteinExistence type="evidence at transcript level"/>
<evidence type="ECO:0000250" key="1"/>
<evidence type="ECO:0000255" key="2">
    <source>
        <dbReference type="PROSITE-ProRule" id="PRU00532"/>
    </source>
</evidence>
<evidence type="ECO:0000256" key="3">
    <source>
        <dbReference type="SAM" id="MobiDB-lite"/>
    </source>
</evidence>
<evidence type="ECO:0000305" key="4"/>
<accession>P36416</accession>
<accession>Q552Y6</accession>
<accession>Q86H48</accession>
<gene>
    <name type="primary">natA</name>
    <name type="synonym">ard1</name>
    <name type="ORF">DDB_G0275449</name>
</gene>